<sequence>MKAKQSKTPRALATGTKLTCADNTGARIVQIVSVFGYHGVRRRQPKMGLGDIATVTVKKGTPDMRKKLVRAVVIRQKKEMRRPNGLRVSFDDNAVVVVDEKNEPKGTEIKGPVAREVAERYPKLGSMATIIV</sequence>
<dbReference type="EMBL" id="CP000780">
    <property type="protein sequence ID" value="ABS55060.1"/>
    <property type="molecule type" value="Genomic_DNA"/>
</dbReference>
<dbReference type="RefSeq" id="WP_012106081.1">
    <property type="nucleotide sequence ID" value="NC_009712.1"/>
</dbReference>
<dbReference type="SMR" id="A7I5P9"/>
<dbReference type="STRING" id="456442.Mboo_0542"/>
<dbReference type="GeneID" id="5412236"/>
<dbReference type="KEGG" id="mbn:Mboo_0542"/>
<dbReference type="eggNOG" id="arCOG04095">
    <property type="taxonomic scope" value="Archaea"/>
</dbReference>
<dbReference type="HOGENOM" id="CLU_095071_3_0_2"/>
<dbReference type="OrthoDB" id="23569at2157"/>
<dbReference type="Proteomes" id="UP000002408">
    <property type="component" value="Chromosome"/>
</dbReference>
<dbReference type="GO" id="GO:0022625">
    <property type="term" value="C:cytosolic large ribosomal subunit"/>
    <property type="evidence" value="ECO:0007669"/>
    <property type="project" value="TreeGrafter"/>
</dbReference>
<dbReference type="GO" id="GO:0070180">
    <property type="term" value="F:large ribosomal subunit rRNA binding"/>
    <property type="evidence" value="ECO:0007669"/>
    <property type="project" value="TreeGrafter"/>
</dbReference>
<dbReference type="GO" id="GO:0003735">
    <property type="term" value="F:structural constituent of ribosome"/>
    <property type="evidence" value="ECO:0007669"/>
    <property type="project" value="InterPro"/>
</dbReference>
<dbReference type="GO" id="GO:0006412">
    <property type="term" value="P:translation"/>
    <property type="evidence" value="ECO:0007669"/>
    <property type="project" value="UniProtKB-UniRule"/>
</dbReference>
<dbReference type="CDD" id="cd00337">
    <property type="entry name" value="Ribosomal_uL14"/>
    <property type="match status" value="1"/>
</dbReference>
<dbReference type="FunFam" id="2.40.150.20:FF:000007">
    <property type="entry name" value="50S ribosomal protein L14"/>
    <property type="match status" value="1"/>
</dbReference>
<dbReference type="Gene3D" id="2.40.150.20">
    <property type="entry name" value="Ribosomal protein L14"/>
    <property type="match status" value="1"/>
</dbReference>
<dbReference type="HAMAP" id="MF_01367">
    <property type="entry name" value="Ribosomal_uL14"/>
    <property type="match status" value="1"/>
</dbReference>
<dbReference type="InterPro" id="IPR000218">
    <property type="entry name" value="Ribosomal_uL14"/>
</dbReference>
<dbReference type="InterPro" id="IPR019971">
    <property type="entry name" value="Ribosomal_uL14_arc"/>
</dbReference>
<dbReference type="InterPro" id="IPR019972">
    <property type="entry name" value="Ribosomal_uL14_CS"/>
</dbReference>
<dbReference type="InterPro" id="IPR036853">
    <property type="entry name" value="Ribosomal_uL14_sf"/>
</dbReference>
<dbReference type="NCBIfam" id="NF006344">
    <property type="entry name" value="PRK08571.1"/>
    <property type="match status" value="1"/>
</dbReference>
<dbReference type="NCBIfam" id="TIGR03673">
    <property type="entry name" value="uL14_arch"/>
    <property type="match status" value="1"/>
</dbReference>
<dbReference type="PANTHER" id="PTHR11761">
    <property type="entry name" value="50S/60S RIBOSOMAL PROTEIN L14/L23"/>
    <property type="match status" value="1"/>
</dbReference>
<dbReference type="PANTHER" id="PTHR11761:SF8">
    <property type="entry name" value="LARGE RIBOSOMAL SUBUNIT PROTEIN UL14"/>
    <property type="match status" value="1"/>
</dbReference>
<dbReference type="Pfam" id="PF00238">
    <property type="entry name" value="Ribosomal_L14"/>
    <property type="match status" value="1"/>
</dbReference>
<dbReference type="SMART" id="SM01374">
    <property type="entry name" value="Ribosomal_L14"/>
    <property type="match status" value="1"/>
</dbReference>
<dbReference type="SUPFAM" id="SSF50193">
    <property type="entry name" value="Ribosomal protein L14"/>
    <property type="match status" value="1"/>
</dbReference>
<dbReference type="PROSITE" id="PS00049">
    <property type="entry name" value="RIBOSOMAL_L14"/>
    <property type="match status" value="1"/>
</dbReference>
<keyword id="KW-1185">Reference proteome</keyword>
<keyword id="KW-0687">Ribonucleoprotein</keyword>
<keyword id="KW-0689">Ribosomal protein</keyword>
<keyword id="KW-0694">RNA-binding</keyword>
<keyword id="KW-0699">rRNA-binding</keyword>
<evidence type="ECO:0000255" key="1">
    <source>
        <dbReference type="HAMAP-Rule" id="MF_01367"/>
    </source>
</evidence>
<evidence type="ECO:0000305" key="2"/>
<comment type="function">
    <text evidence="1">Binds to 23S rRNA. Forms part of two intersubunit bridges in the 70S ribosome.</text>
</comment>
<comment type="subunit">
    <text evidence="1">Part of the 50S ribosomal subunit. Forms a cluster with proteins L3 and L24e, part of which may contact the 16S rRNA in 2 intersubunit bridges.</text>
</comment>
<comment type="similarity">
    <text evidence="1">Belongs to the universal ribosomal protein uL14 family.</text>
</comment>
<name>RL14_METB6</name>
<protein>
    <recommendedName>
        <fullName evidence="1">Large ribosomal subunit protein uL14</fullName>
    </recommendedName>
    <alternativeName>
        <fullName evidence="2">50S ribosomal protein L14</fullName>
    </alternativeName>
</protein>
<accession>A7I5P9</accession>
<reference key="1">
    <citation type="journal article" date="2015" name="Microbiology">
        <title>Genome of Methanoregula boonei 6A8 reveals adaptations to oligotrophic peatland environments.</title>
        <authorList>
            <person name="Braeuer S."/>
            <person name="Cadillo-Quiroz H."/>
            <person name="Kyrpides N."/>
            <person name="Woyke T."/>
            <person name="Goodwin L."/>
            <person name="Detter C."/>
            <person name="Podell S."/>
            <person name="Yavitt J.B."/>
            <person name="Zinder S.H."/>
        </authorList>
    </citation>
    <scope>NUCLEOTIDE SEQUENCE [LARGE SCALE GENOMIC DNA]</scope>
    <source>
        <strain>DSM 21154 / JCM 14090 / 6A8</strain>
    </source>
</reference>
<proteinExistence type="inferred from homology"/>
<organism>
    <name type="scientific">Methanoregula boonei (strain DSM 21154 / JCM 14090 / 6A8)</name>
    <dbReference type="NCBI Taxonomy" id="456442"/>
    <lineage>
        <taxon>Archaea</taxon>
        <taxon>Methanobacteriati</taxon>
        <taxon>Methanobacteriota</taxon>
        <taxon>Stenosarchaea group</taxon>
        <taxon>Methanomicrobia</taxon>
        <taxon>Methanomicrobiales</taxon>
        <taxon>Methanoregulaceae</taxon>
        <taxon>Methanoregula</taxon>
    </lineage>
</organism>
<feature type="chain" id="PRO_1000055628" description="Large ribosomal subunit protein uL14">
    <location>
        <begin position="1"/>
        <end position="132"/>
    </location>
</feature>
<gene>
    <name evidence="1" type="primary">rpl14</name>
    <name type="ordered locus">Mboo_0542</name>
</gene>